<sequence>MFDVLIYLFETYMHNEPEMLVDQDKITDDLADAGFYREDINNALNWLEVLADLQEGQKAPYLYTADPQALRIYTVEECRRLGAACRGFILFLEQIQVLQFDTREMVIDRIMALDSPEIDLEDLKWVVLMVLFNIPGYENAYKQMEELLFEVNDGYLH</sequence>
<organism>
    <name type="scientific">Yersinia pseudotuberculosis serotype I (strain IP32953)</name>
    <dbReference type="NCBI Taxonomy" id="273123"/>
    <lineage>
        <taxon>Bacteria</taxon>
        <taxon>Pseudomonadati</taxon>
        <taxon>Pseudomonadota</taxon>
        <taxon>Gammaproteobacteria</taxon>
        <taxon>Enterobacterales</taxon>
        <taxon>Yersiniaceae</taxon>
        <taxon>Yersinia</taxon>
    </lineage>
</organism>
<gene>
    <name evidence="1" type="primary">smg</name>
    <name type="ordered locus">YPTB3663</name>
</gene>
<reference key="1">
    <citation type="journal article" date="2004" name="Proc. Natl. Acad. Sci. U.S.A.">
        <title>Insights into the evolution of Yersinia pestis through whole-genome comparison with Yersinia pseudotuberculosis.</title>
        <authorList>
            <person name="Chain P.S.G."/>
            <person name="Carniel E."/>
            <person name="Larimer F.W."/>
            <person name="Lamerdin J."/>
            <person name="Stoutland P.O."/>
            <person name="Regala W.M."/>
            <person name="Georgescu A.M."/>
            <person name="Vergez L.M."/>
            <person name="Land M.L."/>
            <person name="Motin V.L."/>
            <person name="Brubaker R.R."/>
            <person name="Fowler J."/>
            <person name="Hinnebusch J."/>
            <person name="Marceau M."/>
            <person name="Medigue C."/>
            <person name="Simonet M."/>
            <person name="Chenal-Francisque V."/>
            <person name="Souza B."/>
            <person name="Dacheux D."/>
            <person name="Elliott J.M."/>
            <person name="Derbise A."/>
            <person name="Hauser L.J."/>
            <person name="Garcia E."/>
        </authorList>
    </citation>
    <scope>NUCLEOTIDE SEQUENCE [LARGE SCALE GENOMIC DNA]</scope>
    <source>
        <strain>IP32953</strain>
    </source>
</reference>
<dbReference type="EMBL" id="BX936398">
    <property type="protein sequence ID" value="CAH22901.1"/>
    <property type="molecule type" value="Genomic_DNA"/>
</dbReference>
<dbReference type="RefSeq" id="WP_002209023.1">
    <property type="nucleotide sequence ID" value="NZ_CP009712.1"/>
</dbReference>
<dbReference type="SMR" id="Q664V6"/>
<dbReference type="KEGG" id="ypo:BZ17_2924"/>
<dbReference type="KEGG" id="yps:YPTB3663"/>
<dbReference type="PATRIC" id="fig|273123.14.peg.3065"/>
<dbReference type="Proteomes" id="UP000001011">
    <property type="component" value="Chromosome"/>
</dbReference>
<dbReference type="HAMAP" id="MF_00598">
    <property type="entry name" value="Smg"/>
    <property type="match status" value="1"/>
</dbReference>
<dbReference type="InterPro" id="IPR007456">
    <property type="entry name" value="Smg"/>
</dbReference>
<dbReference type="NCBIfam" id="NF002897">
    <property type="entry name" value="PRK03430.1"/>
    <property type="match status" value="1"/>
</dbReference>
<dbReference type="PANTHER" id="PTHR38692">
    <property type="entry name" value="PROTEIN SMG"/>
    <property type="match status" value="1"/>
</dbReference>
<dbReference type="PANTHER" id="PTHR38692:SF1">
    <property type="entry name" value="PROTEIN SMG"/>
    <property type="match status" value="1"/>
</dbReference>
<dbReference type="Pfam" id="PF04361">
    <property type="entry name" value="DUF494"/>
    <property type="match status" value="1"/>
</dbReference>
<proteinExistence type="inferred from homology"/>
<comment type="similarity">
    <text evidence="1">Belongs to the Smg family.</text>
</comment>
<accession>Q664V6</accession>
<evidence type="ECO:0000255" key="1">
    <source>
        <dbReference type="HAMAP-Rule" id="MF_00598"/>
    </source>
</evidence>
<name>SMG_YERPS</name>
<feature type="chain" id="PRO_0000209194" description="Protein Smg">
    <location>
        <begin position="1"/>
        <end position="157"/>
    </location>
</feature>
<protein>
    <recommendedName>
        <fullName evidence="1">Protein Smg</fullName>
    </recommendedName>
</protein>